<accession>A9AE52</accession>
<name>ACEK_BURM1</name>
<organism>
    <name type="scientific">Burkholderia multivorans (strain ATCC 17616 / 249)</name>
    <dbReference type="NCBI Taxonomy" id="395019"/>
    <lineage>
        <taxon>Bacteria</taxon>
        <taxon>Pseudomonadati</taxon>
        <taxon>Pseudomonadota</taxon>
        <taxon>Betaproteobacteria</taxon>
        <taxon>Burkholderiales</taxon>
        <taxon>Burkholderiaceae</taxon>
        <taxon>Burkholderia</taxon>
        <taxon>Burkholderia cepacia complex</taxon>
    </lineage>
</organism>
<gene>
    <name evidence="1" type="primary">aceK</name>
    <name type="ordered locus">Bmul_0379</name>
    <name type="ordered locus">BMULJ_02875</name>
</gene>
<dbReference type="EC" id="2.7.11.5" evidence="1"/>
<dbReference type="EC" id="3.1.3.-" evidence="1"/>
<dbReference type="EMBL" id="CP000868">
    <property type="protein sequence ID" value="ABX14074.1"/>
    <property type="molecule type" value="Genomic_DNA"/>
</dbReference>
<dbReference type="EMBL" id="AP009385">
    <property type="protein sequence ID" value="BAG44763.1"/>
    <property type="molecule type" value="Genomic_DNA"/>
</dbReference>
<dbReference type="RefSeq" id="WP_012212617.1">
    <property type="nucleotide sequence ID" value="NC_010804.1"/>
</dbReference>
<dbReference type="SMR" id="A9AE52"/>
<dbReference type="STRING" id="395019.BMULJ_02875"/>
<dbReference type="GeneID" id="89571453"/>
<dbReference type="KEGG" id="bmj:BMULJ_02875"/>
<dbReference type="KEGG" id="bmu:Bmul_0379"/>
<dbReference type="eggNOG" id="COG4579">
    <property type="taxonomic scope" value="Bacteria"/>
</dbReference>
<dbReference type="HOGENOM" id="CLU_033804_1_1_4"/>
<dbReference type="Proteomes" id="UP000008815">
    <property type="component" value="Chromosome 1"/>
</dbReference>
<dbReference type="GO" id="GO:0005737">
    <property type="term" value="C:cytoplasm"/>
    <property type="evidence" value="ECO:0007669"/>
    <property type="project" value="UniProtKB-SubCell"/>
</dbReference>
<dbReference type="GO" id="GO:0008772">
    <property type="term" value="F:[isocitrate dehydrogenase (NADP+)] kinase activity"/>
    <property type="evidence" value="ECO:0007669"/>
    <property type="project" value="UniProtKB-UniRule"/>
</dbReference>
<dbReference type="GO" id="GO:0016208">
    <property type="term" value="F:AMP binding"/>
    <property type="evidence" value="ECO:0007669"/>
    <property type="project" value="TreeGrafter"/>
</dbReference>
<dbReference type="GO" id="GO:0005524">
    <property type="term" value="F:ATP binding"/>
    <property type="evidence" value="ECO:0007669"/>
    <property type="project" value="UniProtKB-UniRule"/>
</dbReference>
<dbReference type="GO" id="GO:0004721">
    <property type="term" value="F:phosphoprotein phosphatase activity"/>
    <property type="evidence" value="ECO:0007669"/>
    <property type="project" value="UniProtKB-KW"/>
</dbReference>
<dbReference type="GO" id="GO:0004674">
    <property type="term" value="F:protein serine/threonine kinase activity"/>
    <property type="evidence" value="ECO:0007669"/>
    <property type="project" value="UniProtKB-KW"/>
</dbReference>
<dbReference type="GO" id="GO:0006006">
    <property type="term" value="P:glucose metabolic process"/>
    <property type="evidence" value="ECO:0007669"/>
    <property type="project" value="InterPro"/>
</dbReference>
<dbReference type="GO" id="GO:0006097">
    <property type="term" value="P:glyoxylate cycle"/>
    <property type="evidence" value="ECO:0007669"/>
    <property type="project" value="UniProtKB-UniRule"/>
</dbReference>
<dbReference type="GO" id="GO:0006099">
    <property type="term" value="P:tricarboxylic acid cycle"/>
    <property type="evidence" value="ECO:0007669"/>
    <property type="project" value="UniProtKB-UniRule"/>
</dbReference>
<dbReference type="HAMAP" id="MF_00747">
    <property type="entry name" value="AceK"/>
    <property type="match status" value="1"/>
</dbReference>
<dbReference type="InterPro" id="IPR046855">
    <property type="entry name" value="AceK_kinase"/>
</dbReference>
<dbReference type="InterPro" id="IPR046854">
    <property type="entry name" value="AceK_regulatory"/>
</dbReference>
<dbReference type="InterPro" id="IPR010452">
    <property type="entry name" value="Isocitrate_DH_AceK"/>
</dbReference>
<dbReference type="NCBIfam" id="NF002804">
    <property type="entry name" value="PRK02946.1"/>
    <property type="match status" value="1"/>
</dbReference>
<dbReference type="PANTHER" id="PTHR39559">
    <property type="match status" value="1"/>
</dbReference>
<dbReference type="PANTHER" id="PTHR39559:SF1">
    <property type="entry name" value="ISOCITRATE DEHYDROGENASE KINASE_PHOSPHATASE"/>
    <property type="match status" value="1"/>
</dbReference>
<dbReference type="Pfam" id="PF06315">
    <property type="entry name" value="AceK_kinase"/>
    <property type="match status" value="1"/>
</dbReference>
<dbReference type="Pfam" id="PF20423">
    <property type="entry name" value="AceK_regulatory"/>
    <property type="match status" value="1"/>
</dbReference>
<dbReference type="PIRSF" id="PIRSF000719">
    <property type="entry name" value="AceK"/>
    <property type="match status" value="1"/>
</dbReference>
<evidence type="ECO:0000255" key="1">
    <source>
        <dbReference type="HAMAP-Rule" id="MF_00747"/>
    </source>
</evidence>
<reference key="1">
    <citation type="submission" date="2007-10" db="EMBL/GenBank/DDBJ databases">
        <title>Complete sequence of chromosome 1 of Burkholderia multivorans ATCC 17616.</title>
        <authorList>
            <person name="Copeland A."/>
            <person name="Lucas S."/>
            <person name="Lapidus A."/>
            <person name="Barry K."/>
            <person name="Glavina del Rio T."/>
            <person name="Dalin E."/>
            <person name="Tice H."/>
            <person name="Pitluck S."/>
            <person name="Chain P."/>
            <person name="Malfatti S."/>
            <person name="Shin M."/>
            <person name="Vergez L."/>
            <person name="Schmutz J."/>
            <person name="Larimer F."/>
            <person name="Land M."/>
            <person name="Hauser L."/>
            <person name="Kyrpides N."/>
            <person name="Kim E."/>
            <person name="Tiedje J."/>
            <person name="Richardson P."/>
        </authorList>
    </citation>
    <scope>NUCLEOTIDE SEQUENCE [LARGE SCALE GENOMIC DNA]</scope>
    <source>
        <strain>ATCC 17616 / 249</strain>
    </source>
</reference>
<reference key="2">
    <citation type="submission" date="2007-04" db="EMBL/GenBank/DDBJ databases">
        <title>Complete genome sequence of Burkholderia multivorans ATCC 17616.</title>
        <authorList>
            <person name="Ohtsubo Y."/>
            <person name="Yamashita A."/>
            <person name="Kurokawa K."/>
            <person name="Takami H."/>
            <person name="Yuhara S."/>
            <person name="Nishiyama E."/>
            <person name="Endo R."/>
            <person name="Miyazaki R."/>
            <person name="Ono A."/>
            <person name="Yano K."/>
            <person name="Ito M."/>
            <person name="Sota M."/>
            <person name="Yuji N."/>
            <person name="Hattori M."/>
            <person name="Tsuda M."/>
        </authorList>
    </citation>
    <scope>NUCLEOTIDE SEQUENCE [LARGE SCALE GENOMIC DNA]</scope>
    <source>
        <strain>ATCC 17616 / 249</strain>
    </source>
</reference>
<protein>
    <recommendedName>
        <fullName evidence="1">Isocitrate dehydrogenase kinase/phosphatase</fullName>
        <shortName evidence="1">IDH kinase/phosphatase</shortName>
        <shortName evidence="1">IDHK/P</shortName>
        <ecNumber evidence="1">2.7.11.5</ecNumber>
        <ecNumber evidence="1">3.1.3.-</ecNumber>
    </recommendedName>
</protein>
<feature type="chain" id="PRO_1000133260" description="Isocitrate dehydrogenase kinase/phosphatase">
    <location>
        <begin position="1"/>
        <end position="605"/>
    </location>
</feature>
<feature type="active site" evidence="1">
    <location>
        <position position="383"/>
    </location>
</feature>
<feature type="binding site" evidence="1">
    <location>
        <begin position="327"/>
        <end position="333"/>
    </location>
    <ligand>
        <name>ATP</name>
        <dbReference type="ChEBI" id="CHEBI:30616"/>
    </ligand>
</feature>
<feature type="binding site" evidence="1">
    <location>
        <position position="348"/>
    </location>
    <ligand>
        <name>ATP</name>
        <dbReference type="ChEBI" id="CHEBI:30616"/>
    </ligand>
</feature>
<keyword id="KW-0067">ATP-binding</keyword>
<keyword id="KW-0963">Cytoplasm</keyword>
<keyword id="KW-0329">Glyoxylate bypass</keyword>
<keyword id="KW-0378">Hydrolase</keyword>
<keyword id="KW-0418">Kinase</keyword>
<keyword id="KW-0547">Nucleotide-binding</keyword>
<keyword id="KW-0904">Protein phosphatase</keyword>
<keyword id="KW-1185">Reference proteome</keyword>
<keyword id="KW-0723">Serine/threonine-protein kinase</keyword>
<keyword id="KW-0808">Transferase</keyword>
<keyword id="KW-0816">Tricarboxylic acid cycle</keyword>
<proteinExistence type="inferred from homology"/>
<comment type="function">
    <text evidence="1">Bifunctional enzyme which can phosphorylate or dephosphorylate isocitrate dehydrogenase (IDH) on a specific serine residue. This is a regulatory mechanism which enables bacteria to bypass the Krebs cycle via the glyoxylate shunt in response to the source of carbon. When bacteria are grown on glucose, IDH is fully active and unphosphorylated, but when grown on acetate or ethanol, the activity of IDH declines drastically concomitant with its phosphorylation.</text>
</comment>
<comment type="catalytic activity">
    <reaction evidence="1">
        <text>L-seryl-[isocitrate dehydrogenase] + ATP = O-phospho-L-seryl-[isocitrate dehydrogenase] + ADP + H(+)</text>
        <dbReference type="Rhea" id="RHEA:43540"/>
        <dbReference type="Rhea" id="RHEA-COMP:10605"/>
        <dbReference type="Rhea" id="RHEA-COMP:10606"/>
        <dbReference type="ChEBI" id="CHEBI:15378"/>
        <dbReference type="ChEBI" id="CHEBI:29999"/>
        <dbReference type="ChEBI" id="CHEBI:30616"/>
        <dbReference type="ChEBI" id="CHEBI:83421"/>
        <dbReference type="ChEBI" id="CHEBI:456216"/>
        <dbReference type="EC" id="2.7.11.5"/>
    </reaction>
</comment>
<comment type="subcellular location">
    <subcellularLocation>
        <location evidence="1">Cytoplasm</location>
    </subcellularLocation>
</comment>
<comment type="similarity">
    <text evidence="1">Belongs to the AceK family.</text>
</comment>
<sequence length="605" mass="70256">MNHFPKLLSSQIGFDVAQSMLEYFDRHYRIFREAAVEAKALFERADWHGLQRLARERITSYDERVQECVEVLQDEYDAESIDDEVWQQIKLHYIGLLTSHRQPECAETFFNSVCCKILHRSYFNNDFIFVRPAISTEYLENDEPAAKPTYRAYYPGTDGLAVTLERIVTNFQLEPPFEDLARDIACVMQAIHDEFGRFDEAPNFQIHVLSSLFFRNKSAYIVGRIINADRVLPFAVPIRHVRPGLLALDTVLLRRDLLQIIFSFSHSYFLVDMDVPSAYVDFLCTIMPGKPKAEIYTSVGLQKQGKNLFYRDLLHHLSHSSDRFIVAPGIKGLVMLVFTLPSFPYVFKIIKDHFPPPKETTRRQIMEKYLLVKRHDRLGRMADTLEYSSVALPLARLDHALVRELEKEVPSLLEYEGDNLVIKHLYIERRMTPLNLYLQNGTDAEVEHGVKEYGNAVKELMKANIFPGDMLYKNFGVTRHGRVVFYDYDEIEYLTDCNVRRVPPPRNEEDELSGEPWYTVGPHDIFPETYGPFLLGDPRVRAAFLKHHADFFDPALWQASKDKLLQGELPDFFPYDASLRFCVRYPERFRATDERAPARGAQRAA</sequence>